<name>LEUD_ECO8A</name>
<sequence>MAEKFIKHTGLVVPLDAANVDTDAIIPKQFLQKVTRTGFGAHLFNDWRFLDEKGQQPNPDFVLNFPQYQGASILLARENFGCGSSREHAPWALTDYGFKVVIAPSFADIFYGNSFNNQLLPVKLSDAEVDELFALVKANPGIHFDVDLEAQEVKAGEKTYRFTIDAFRRHCMMNGLDSIGLTLQHDDAIAAYEAKQPAFMN</sequence>
<organism>
    <name type="scientific">Escherichia coli O8 (strain IAI1)</name>
    <dbReference type="NCBI Taxonomy" id="585034"/>
    <lineage>
        <taxon>Bacteria</taxon>
        <taxon>Pseudomonadati</taxon>
        <taxon>Pseudomonadota</taxon>
        <taxon>Gammaproteobacteria</taxon>
        <taxon>Enterobacterales</taxon>
        <taxon>Enterobacteriaceae</taxon>
        <taxon>Escherichia</taxon>
    </lineage>
</organism>
<gene>
    <name evidence="1" type="primary">leuD</name>
    <name type="ordered locus">ECIAI1_0072</name>
</gene>
<accession>B7M116</accession>
<feature type="chain" id="PRO_1000135803" description="3-isopropylmalate dehydratase small subunit">
    <location>
        <begin position="1"/>
        <end position="201"/>
    </location>
</feature>
<dbReference type="EC" id="4.2.1.33" evidence="1"/>
<dbReference type="EMBL" id="CU928160">
    <property type="protein sequence ID" value="CAQ96962.1"/>
    <property type="molecule type" value="Genomic_DNA"/>
</dbReference>
<dbReference type="RefSeq" id="WP_000818228.1">
    <property type="nucleotide sequence ID" value="NC_011741.1"/>
</dbReference>
<dbReference type="SMR" id="B7M116"/>
<dbReference type="GeneID" id="93777364"/>
<dbReference type="KEGG" id="ecr:ECIAI1_0072"/>
<dbReference type="HOGENOM" id="CLU_081378_0_3_6"/>
<dbReference type="UniPathway" id="UPA00048">
    <property type="reaction ID" value="UER00071"/>
</dbReference>
<dbReference type="GO" id="GO:0009316">
    <property type="term" value="C:3-isopropylmalate dehydratase complex"/>
    <property type="evidence" value="ECO:0007669"/>
    <property type="project" value="InterPro"/>
</dbReference>
<dbReference type="GO" id="GO:0003861">
    <property type="term" value="F:3-isopropylmalate dehydratase activity"/>
    <property type="evidence" value="ECO:0007669"/>
    <property type="project" value="UniProtKB-UniRule"/>
</dbReference>
<dbReference type="GO" id="GO:0009098">
    <property type="term" value="P:L-leucine biosynthetic process"/>
    <property type="evidence" value="ECO:0007669"/>
    <property type="project" value="UniProtKB-UniRule"/>
</dbReference>
<dbReference type="CDD" id="cd01577">
    <property type="entry name" value="IPMI_Swivel"/>
    <property type="match status" value="1"/>
</dbReference>
<dbReference type="FunFam" id="3.20.19.10:FF:000003">
    <property type="entry name" value="3-isopropylmalate dehydratase small subunit"/>
    <property type="match status" value="1"/>
</dbReference>
<dbReference type="Gene3D" id="3.20.19.10">
    <property type="entry name" value="Aconitase, domain 4"/>
    <property type="match status" value="1"/>
</dbReference>
<dbReference type="HAMAP" id="MF_01031">
    <property type="entry name" value="LeuD_type1"/>
    <property type="match status" value="1"/>
</dbReference>
<dbReference type="InterPro" id="IPR004431">
    <property type="entry name" value="3-IsopropMal_deHydase_ssu"/>
</dbReference>
<dbReference type="InterPro" id="IPR015928">
    <property type="entry name" value="Aconitase/3IPM_dehydase_swvl"/>
</dbReference>
<dbReference type="InterPro" id="IPR000573">
    <property type="entry name" value="AconitaseA/IPMdHydase_ssu_swvl"/>
</dbReference>
<dbReference type="InterPro" id="IPR033940">
    <property type="entry name" value="IPMI_Swivel"/>
</dbReference>
<dbReference type="InterPro" id="IPR050075">
    <property type="entry name" value="LeuD"/>
</dbReference>
<dbReference type="NCBIfam" id="TIGR00171">
    <property type="entry name" value="leuD"/>
    <property type="match status" value="1"/>
</dbReference>
<dbReference type="NCBIfam" id="NF002458">
    <property type="entry name" value="PRK01641.1"/>
    <property type="match status" value="1"/>
</dbReference>
<dbReference type="PANTHER" id="PTHR43345:SF5">
    <property type="entry name" value="3-ISOPROPYLMALATE DEHYDRATASE SMALL SUBUNIT"/>
    <property type="match status" value="1"/>
</dbReference>
<dbReference type="PANTHER" id="PTHR43345">
    <property type="entry name" value="3-ISOPROPYLMALATE DEHYDRATASE SMALL SUBUNIT 2-RELATED-RELATED"/>
    <property type="match status" value="1"/>
</dbReference>
<dbReference type="Pfam" id="PF00694">
    <property type="entry name" value="Aconitase_C"/>
    <property type="match status" value="1"/>
</dbReference>
<dbReference type="SUPFAM" id="SSF52016">
    <property type="entry name" value="LeuD/IlvD-like"/>
    <property type="match status" value="1"/>
</dbReference>
<comment type="function">
    <text evidence="1">Catalyzes the isomerization between 2-isopropylmalate and 3-isopropylmalate, via the formation of 2-isopropylmaleate.</text>
</comment>
<comment type="catalytic activity">
    <reaction evidence="1">
        <text>(2R,3S)-3-isopropylmalate = (2S)-2-isopropylmalate</text>
        <dbReference type="Rhea" id="RHEA:32287"/>
        <dbReference type="ChEBI" id="CHEBI:1178"/>
        <dbReference type="ChEBI" id="CHEBI:35121"/>
        <dbReference type="EC" id="4.2.1.33"/>
    </reaction>
</comment>
<comment type="pathway">
    <text evidence="1">Amino-acid biosynthesis; L-leucine biosynthesis; L-leucine from 3-methyl-2-oxobutanoate: step 2/4.</text>
</comment>
<comment type="subunit">
    <text evidence="1">Heterodimer of LeuC and LeuD.</text>
</comment>
<comment type="similarity">
    <text evidence="1">Belongs to the LeuD family. LeuD type 1 subfamily.</text>
</comment>
<reference key="1">
    <citation type="journal article" date="2009" name="PLoS Genet.">
        <title>Organised genome dynamics in the Escherichia coli species results in highly diverse adaptive paths.</title>
        <authorList>
            <person name="Touchon M."/>
            <person name="Hoede C."/>
            <person name="Tenaillon O."/>
            <person name="Barbe V."/>
            <person name="Baeriswyl S."/>
            <person name="Bidet P."/>
            <person name="Bingen E."/>
            <person name="Bonacorsi S."/>
            <person name="Bouchier C."/>
            <person name="Bouvet O."/>
            <person name="Calteau A."/>
            <person name="Chiapello H."/>
            <person name="Clermont O."/>
            <person name="Cruveiller S."/>
            <person name="Danchin A."/>
            <person name="Diard M."/>
            <person name="Dossat C."/>
            <person name="Karoui M.E."/>
            <person name="Frapy E."/>
            <person name="Garry L."/>
            <person name="Ghigo J.M."/>
            <person name="Gilles A.M."/>
            <person name="Johnson J."/>
            <person name="Le Bouguenec C."/>
            <person name="Lescat M."/>
            <person name="Mangenot S."/>
            <person name="Martinez-Jehanne V."/>
            <person name="Matic I."/>
            <person name="Nassif X."/>
            <person name="Oztas S."/>
            <person name="Petit M.A."/>
            <person name="Pichon C."/>
            <person name="Rouy Z."/>
            <person name="Ruf C.S."/>
            <person name="Schneider D."/>
            <person name="Tourret J."/>
            <person name="Vacherie B."/>
            <person name="Vallenet D."/>
            <person name="Medigue C."/>
            <person name="Rocha E.P.C."/>
            <person name="Denamur E."/>
        </authorList>
    </citation>
    <scope>NUCLEOTIDE SEQUENCE [LARGE SCALE GENOMIC DNA]</scope>
    <source>
        <strain>IAI1</strain>
    </source>
</reference>
<evidence type="ECO:0000255" key="1">
    <source>
        <dbReference type="HAMAP-Rule" id="MF_01031"/>
    </source>
</evidence>
<proteinExistence type="inferred from homology"/>
<keyword id="KW-0028">Amino-acid biosynthesis</keyword>
<keyword id="KW-0100">Branched-chain amino acid biosynthesis</keyword>
<keyword id="KW-0432">Leucine biosynthesis</keyword>
<keyword id="KW-0456">Lyase</keyword>
<protein>
    <recommendedName>
        <fullName evidence="1">3-isopropylmalate dehydratase small subunit</fullName>
        <ecNumber evidence="1">4.2.1.33</ecNumber>
    </recommendedName>
    <alternativeName>
        <fullName evidence="1">Alpha-IPM isomerase</fullName>
        <shortName evidence="1">IPMI</shortName>
    </alternativeName>
    <alternativeName>
        <fullName evidence="1">Isopropylmalate isomerase</fullName>
    </alternativeName>
</protein>